<keyword id="KW-0067">ATP-binding</keyword>
<keyword id="KW-0963">Cytoplasm</keyword>
<keyword id="KW-0436">Ligase</keyword>
<keyword id="KW-0547">Nucleotide-binding</keyword>
<keyword id="KW-0566">Pantothenate biosynthesis</keyword>
<evidence type="ECO:0000255" key="1">
    <source>
        <dbReference type="HAMAP-Rule" id="MF_00158"/>
    </source>
</evidence>
<sequence length="283" mass="31383">MELLQTIAAVRNYVAAARQRGLSIGLVPTMGYLHEGHLSLARAARQQNDVVIMSIFVNPTQFGPNEDFARYPRDLERDRELAAGAGVDAVFAPAVEEMYPAGYATYVQVEGLTEVLCGASRPGHFRGVTTVVSKLFNIVQPDRAYFGQKDYQQALVIKRMVRDLNFPIEIITIPTVREADGLALSSRNKYLTPEQRRSALSLHRALHLGSDLIKAGEREAAVVRRAMEKEITAWPETRIDYVAISDADTLKPLEKIAGRVLLALAVWVGNTRLIDNVVLEVND</sequence>
<proteinExistence type="inferred from homology"/>
<name>PANC_MOOTA</name>
<protein>
    <recommendedName>
        <fullName evidence="1">Pantothenate synthetase</fullName>
        <shortName evidence="1">PS</shortName>
        <ecNumber evidence="1">6.3.2.1</ecNumber>
    </recommendedName>
    <alternativeName>
        <fullName evidence="1">Pantoate--beta-alanine ligase</fullName>
    </alternativeName>
    <alternativeName>
        <fullName evidence="1">Pantoate-activating enzyme</fullName>
    </alternativeName>
</protein>
<organism>
    <name type="scientific">Moorella thermoacetica (strain ATCC 39073 / JCM 9320)</name>
    <dbReference type="NCBI Taxonomy" id="264732"/>
    <lineage>
        <taxon>Bacteria</taxon>
        <taxon>Bacillati</taxon>
        <taxon>Bacillota</taxon>
        <taxon>Clostridia</taxon>
        <taxon>Moorellales</taxon>
        <taxon>Moorellaceae</taxon>
        <taxon>Moorella</taxon>
    </lineage>
</organism>
<feature type="chain" id="PRO_0000305484" description="Pantothenate synthetase">
    <location>
        <begin position="1"/>
        <end position="283"/>
    </location>
</feature>
<feature type="active site" description="Proton donor" evidence="1">
    <location>
        <position position="37"/>
    </location>
</feature>
<feature type="binding site" evidence="1">
    <location>
        <begin position="30"/>
        <end position="37"/>
    </location>
    <ligand>
        <name>ATP</name>
        <dbReference type="ChEBI" id="CHEBI:30616"/>
    </ligand>
</feature>
<feature type="binding site" evidence="1">
    <location>
        <position position="61"/>
    </location>
    <ligand>
        <name>(R)-pantoate</name>
        <dbReference type="ChEBI" id="CHEBI:15980"/>
    </ligand>
</feature>
<feature type="binding site" evidence="1">
    <location>
        <position position="61"/>
    </location>
    <ligand>
        <name>beta-alanine</name>
        <dbReference type="ChEBI" id="CHEBI:57966"/>
    </ligand>
</feature>
<feature type="binding site" evidence="1">
    <location>
        <begin position="147"/>
        <end position="150"/>
    </location>
    <ligand>
        <name>ATP</name>
        <dbReference type="ChEBI" id="CHEBI:30616"/>
    </ligand>
</feature>
<feature type="binding site" evidence="1">
    <location>
        <position position="153"/>
    </location>
    <ligand>
        <name>(R)-pantoate</name>
        <dbReference type="ChEBI" id="CHEBI:15980"/>
    </ligand>
</feature>
<feature type="binding site" evidence="1">
    <location>
        <position position="176"/>
    </location>
    <ligand>
        <name>ATP</name>
        <dbReference type="ChEBI" id="CHEBI:30616"/>
    </ligand>
</feature>
<feature type="binding site" evidence="1">
    <location>
        <begin position="184"/>
        <end position="187"/>
    </location>
    <ligand>
        <name>ATP</name>
        <dbReference type="ChEBI" id="CHEBI:30616"/>
    </ligand>
</feature>
<gene>
    <name evidence="1" type="primary">panC</name>
    <name type="ordered locus">Moth_0141</name>
</gene>
<reference key="1">
    <citation type="journal article" date="2008" name="Environ. Microbiol.">
        <title>The complete genome sequence of Moorella thermoacetica (f. Clostridium thermoaceticum).</title>
        <authorList>
            <person name="Pierce E."/>
            <person name="Xie G."/>
            <person name="Barabote R.D."/>
            <person name="Saunders E."/>
            <person name="Han C.S."/>
            <person name="Detter J.C."/>
            <person name="Richardson P."/>
            <person name="Brettin T.S."/>
            <person name="Das A."/>
            <person name="Ljungdahl L.G."/>
            <person name="Ragsdale S.W."/>
        </authorList>
    </citation>
    <scope>NUCLEOTIDE SEQUENCE [LARGE SCALE GENOMIC DNA]</scope>
    <source>
        <strain>ATCC 39073 / JCM 9320</strain>
    </source>
</reference>
<dbReference type="EC" id="6.3.2.1" evidence="1"/>
<dbReference type="EMBL" id="CP000232">
    <property type="protein sequence ID" value="ABC18479.1"/>
    <property type="molecule type" value="Genomic_DNA"/>
</dbReference>
<dbReference type="RefSeq" id="YP_429022.1">
    <property type="nucleotide sequence ID" value="NC_007644.1"/>
</dbReference>
<dbReference type="SMR" id="Q2RM60"/>
<dbReference type="STRING" id="264732.Moth_0141"/>
<dbReference type="EnsemblBacteria" id="ABC18479">
    <property type="protein sequence ID" value="ABC18479"/>
    <property type="gene ID" value="Moth_0141"/>
</dbReference>
<dbReference type="KEGG" id="mta:Moth_0141"/>
<dbReference type="PATRIC" id="fig|264732.11.peg.148"/>
<dbReference type="eggNOG" id="COG0414">
    <property type="taxonomic scope" value="Bacteria"/>
</dbReference>
<dbReference type="HOGENOM" id="CLU_047148_0_0_9"/>
<dbReference type="OrthoDB" id="9773087at2"/>
<dbReference type="UniPathway" id="UPA00028">
    <property type="reaction ID" value="UER00005"/>
</dbReference>
<dbReference type="GO" id="GO:0005829">
    <property type="term" value="C:cytosol"/>
    <property type="evidence" value="ECO:0007669"/>
    <property type="project" value="TreeGrafter"/>
</dbReference>
<dbReference type="GO" id="GO:0005524">
    <property type="term" value="F:ATP binding"/>
    <property type="evidence" value="ECO:0007669"/>
    <property type="project" value="UniProtKB-KW"/>
</dbReference>
<dbReference type="GO" id="GO:0004592">
    <property type="term" value="F:pantoate-beta-alanine ligase activity"/>
    <property type="evidence" value="ECO:0007669"/>
    <property type="project" value="UniProtKB-UniRule"/>
</dbReference>
<dbReference type="GO" id="GO:0015940">
    <property type="term" value="P:pantothenate biosynthetic process"/>
    <property type="evidence" value="ECO:0007669"/>
    <property type="project" value="UniProtKB-UniRule"/>
</dbReference>
<dbReference type="CDD" id="cd00560">
    <property type="entry name" value="PanC"/>
    <property type="match status" value="1"/>
</dbReference>
<dbReference type="FunFam" id="3.30.1300.10:FF:000001">
    <property type="entry name" value="Pantothenate synthetase"/>
    <property type="match status" value="1"/>
</dbReference>
<dbReference type="FunFam" id="3.40.50.620:FF:000013">
    <property type="entry name" value="Pantothenate synthetase"/>
    <property type="match status" value="1"/>
</dbReference>
<dbReference type="Gene3D" id="3.40.50.620">
    <property type="entry name" value="HUPs"/>
    <property type="match status" value="1"/>
</dbReference>
<dbReference type="Gene3D" id="3.30.1300.10">
    <property type="entry name" value="Pantoate-beta-alanine ligase, C-terminal domain"/>
    <property type="match status" value="1"/>
</dbReference>
<dbReference type="HAMAP" id="MF_00158">
    <property type="entry name" value="PanC"/>
    <property type="match status" value="1"/>
</dbReference>
<dbReference type="InterPro" id="IPR004821">
    <property type="entry name" value="Cyt_trans-like"/>
</dbReference>
<dbReference type="InterPro" id="IPR003721">
    <property type="entry name" value="Pantoate_ligase"/>
</dbReference>
<dbReference type="InterPro" id="IPR042176">
    <property type="entry name" value="Pantoate_ligase_C"/>
</dbReference>
<dbReference type="InterPro" id="IPR014729">
    <property type="entry name" value="Rossmann-like_a/b/a_fold"/>
</dbReference>
<dbReference type="NCBIfam" id="TIGR00125">
    <property type="entry name" value="cyt_tran_rel"/>
    <property type="match status" value="1"/>
</dbReference>
<dbReference type="NCBIfam" id="TIGR00018">
    <property type="entry name" value="panC"/>
    <property type="match status" value="1"/>
</dbReference>
<dbReference type="PANTHER" id="PTHR21299">
    <property type="entry name" value="CYTIDYLATE KINASE/PANTOATE-BETA-ALANINE LIGASE"/>
    <property type="match status" value="1"/>
</dbReference>
<dbReference type="PANTHER" id="PTHR21299:SF1">
    <property type="entry name" value="PANTOATE--BETA-ALANINE LIGASE"/>
    <property type="match status" value="1"/>
</dbReference>
<dbReference type="Pfam" id="PF02569">
    <property type="entry name" value="Pantoate_ligase"/>
    <property type="match status" value="1"/>
</dbReference>
<dbReference type="SUPFAM" id="SSF52374">
    <property type="entry name" value="Nucleotidylyl transferase"/>
    <property type="match status" value="1"/>
</dbReference>
<accession>Q2RM60</accession>
<comment type="function">
    <text evidence="1">Catalyzes the condensation of pantoate with beta-alanine in an ATP-dependent reaction via a pantoyl-adenylate intermediate.</text>
</comment>
<comment type="catalytic activity">
    <reaction evidence="1">
        <text>(R)-pantoate + beta-alanine + ATP = (R)-pantothenate + AMP + diphosphate + H(+)</text>
        <dbReference type="Rhea" id="RHEA:10912"/>
        <dbReference type="ChEBI" id="CHEBI:15378"/>
        <dbReference type="ChEBI" id="CHEBI:15980"/>
        <dbReference type="ChEBI" id="CHEBI:29032"/>
        <dbReference type="ChEBI" id="CHEBI:30616"/>
        <dbReference type="ChEBI" id="CHEBI:33019"/>
        <dbReference type="ChEBI" id="CHEBI:57966"/>
        <dbReference type="ChEBI" id="CHEBI:456215"/>
        <dbReference type="EC" id="6.3.2.1"/>
    </reaction>
</comment>
<comment type="pathway">
    <text evidence="1">Cofactor biosynthesis; (R)-pantothenate biosynthesis; (R)-pantothenate from (R)-pantoate and beta-alanine: step 1/1.</text>
</comment>
<comment type="subunit">
    <text evidence="1">Homodimer.</text>
</comment>
<comment type="subcellular location">
    <subcellularLocation>
        <location evidence="1">Cytoplasm</location>
    </subcellularLocation>
</comment>
<comment type="miscellaneous">
    <text evidence="1">The reaction proceeds by a bi uni uni bi ping pong mechanism.</text>
</comment>
<comment type="similarity">
    <text evidence="1">Belongs to the pantothenate synthetase family.</text>
</comment>